<evidence type="ECO:0000250" key="1"/>
<evidence type="ECO:0000250" key="2">
    <source>
        <dbReference type="UniProtKB" id="Q04584"/>
    </source>
</evidence>
<evidence type="ECO:0000250" key="3">
    <source>
        <dbReference type="UniProtKB" id="Q15942"/>
    </source>
</evidence>
<evidence type="ECO:0000255" key="4"/>
<evidence type="ECO:0000255" key="5">
    <source>
        <dbReference type="PROSITE-ProRule" id="PRU00125"/>
    </source>
</evidence>
<evidence type="ECO:0000256" key="6">
    <source>
        <dbReference type="SAM" id="MobiDB-lite"/>
    </source>
</evidence>
<evidence type="ECO:0000269" key="7">
    <source>
    </source>
</evidence>
<evidence type="ECO:0000305" key="8"/>
<evidence type="ECO:0000312" key="9">
    <source>
        <dbReference type="EMBL" id="ABM66816.1"/>
    </source>
</evidence>
<reference evidence="8 9" key="1">
    <citation type="journal article" date="2008" name="Dev. Dyn.">
        <title>The LIM-domain protein zyxin binds the homeodomain factor Xanf1/Hesx1 and modulates its activity in the anterior neural plate of Xenopus laevis embryo.</title>
        <authorList>
            <person name="Martynova N.Y."/>
            <person name="Eroshkin F.M."/>
            <person name="Ermolina L.V."/>
            <person name="Ermakova G.V."/>
            <person name="Korotaeva A.L."/>
            <person name="Smurova K.M."/>
            <person name="Gyoeva F.K."/>
            <person name="Zaraisky A.G."/>
        </authorList>
    </citation>
    <scope>NUCLEOTIDE SEQUENCE [MRNA]</scope>
    <scope>FUNCTION</scope>
    <scope>INTERACTION WITH HESX1</scope>
    <scope>TISSUE SPECIFICITY</scope>
    <scope>DEVELOPMENTAL STAGE</scope>
    <source>
        <tissue evidence="7">Embryo</tissue>
    </source>
</reference>
<accession>A5H447</accession>
<sequence length="663" mass="70725">MDPAAPATRMTSSFTINISTPSFYNPPKKFAPVVPPKPKINPFKAPEEPQSLVPQENSAGPGLHQAFVGKVGEMPPGVDHDDFVLPPPPPSEESISPPSSSFPPPPPSFGDEGLGSPSGGSFPPPPPPEFSEPFPPPIEEFFPSPPPLEECVSDTQDLPVPVPPPPPPPLPSPPAAPPPKPSAPCEAPKPAPVFPKSSPPPAFPKPEPPSVAPKAASSIFIPKPSAPMAVAPKPLAPPPVAAKPSGPVSFAPPSPAPHTFSPDPSAPAHTFSPKTVTFSPKSAPHTFMPKPSAPVTYPQKTTEPPAEASQSSPKVTPAAKHEAPPPTVPSGGRAPGFSFAQQRERPRVLEKPRANLQGSEPEHEPTVEVQVERTRSLGPQTESGRSPGAQSTGGKDMKPLPEGLRSQKPMSDGIHRTGGQHSGHKVTGQQDQTLGSQGLNMKEVEELEMLTQQLMREMDKPPTAEAHSMELCGFCGRGLSRTETVVRAGEHLYHVACFTCSRCDQQLQGQQYYESAGKPLCDECYQDTLECCAVCDKKITERLLKAIGKSYHPSCFTCAVCKCSLQGEPFIVDDNKLPHCVNDYHRRYAPRCCVCGDPIAPEPGRDETVRVVALEKNFHMMCYKCEDCGCPLSIEADDAGCFPLDGHVLCKKCHTVRARAALG</sequence>
<gene>
    <name evidence="2" type="primary">zyx</name>
</gene>
<protein>
    <recommendedName>
        <fullName>Zyxin</fullName>
    </recommendedName>
</protein>
<comment type="function">
    <text evidence="2 7">Adhesion plaque protein. May be a component of a signal transduction pathway that mediates adhesion-stimulated changes in gene expression (By similarity). Suppresses the transcription-repressing activity of hesx1/anf1.</text>
</comment>
<comment type="subunit">
    <text evidence="7">Interacts (via LIM2 domain) with hesx1/anf1.</text>
</comment>
<comment type="interaction">
    <interactant intactId="EBI-5651620">
        <id>A5H447</id>
    </interactant>
    <interactant intactId="EBI-5651634">
        <id>Q91898</id>
        <label>hesx1-b</label>
    </interactant>
    <organismsDiffer>false</organismsDiffer>
    <experiments>5</experiments>
</comment>
<comment type="subcellular location">
    <subcellularLocation>
        <location evidence="2 3">Cytoplasm</location>
    </subcellularLocation>
    <subcellularLocation>
        <location evidence="2 3">Cytoplasm</location>
        <location evidence="2 3">Cytoskeleton</location>
    </subcellularLocation>
    <subcellularLocation>
        <location evidence="1">Cell junction</location>
        <location evidence="1">Focal adhesion</location>
    </subcellularLocation>
    <text evidence="2 3">Associates with the actin cytoskeleton near the adhesion plaques. Enters the nucleus in the presence of hesx1.</text>
</comment>
<comment type="tissue specificity">
    <text evidence="7">At the early gastrula stage, expressed at a low level in the animal hemisphere. Expression rises by the end of gastrulation in the anterior part of the embryo, where it gradually increases by the midneurula stage. During neurulation, expression continues most intensively in the anterior part of the neural plate and around it. At later stages, intensely expressed in the brain and at lower levels in the spinal cord, eyes, nasal placodes, within somites, and around the cement gland.</text>
</comment>
<comment type="developmental stage">
    <text evidence="7">Expressed at a low level at early stages. Expression increases during gastrulation, reaches maximum levels by the middle of neurulation, and slightly decreases during later development.</text>
</comment>
<comment type="similarity">
    <text evidence="4">Belongs to the zyxin/ajuba family.</text>
</comment>
<name>ZYX_XENLA</name>
<proteinExistence type="evidence at protein level"/>
<organism>
    <name type="scientific">Xenopus laevis</name>
    <name type="common">African clawed frog</name>
    <dbReference type="NCBI Taxonomy" id="8355"/>
    <lineage>
        <taxon>Eukaryota</taxon>
        <taxon>Metazoa</taxon>
        <taxon>Chordata</taxon>
        <taxon>Craniata</taxon>
        <taxon>Vertebrata</taxon>
        <taxon>Euteleostomi</taxon>
        <taxon>Amphibia</taxon>
        <taxon>Batrachia</taxon>
        <taxon>Anura</taxon>
        <taxon>Pipoidea</taxon>
        <taxon>Pipidae</taxon>
        <taxon>Xenopodinae</taxon>
        <taxon>Xenopus</taxon>
        <taxon>Xenopus</taxon>
    </lineage>
</organism>
<feature type="chain" id="PRO_0000331487" description="Zyxin">
    <location>
        <begin position="1"/>
        <end position="663"/>
    </location>
</feature>
<feature type="domain" description="LIM zinc-binding 1" evidence="5">
    <location>
        <begin position="470"/>
        <end position="531"/>
    </location>
</feature>
<feature type="domain" description="LIM zinc-binding 2" evidence="5">
    <location>
        <begin position="532"/>
        <end position="589"/>
    </location>
</feature>
<feature type="domain" description="LIM zinc-binding 3" evidence="5">
    <location>
        <begin position="590"/>
        <end position="660"/>
    </location>
</feature>
<feature type="region of interest" description="Disordered" evidence="6">
    <location>
        <begin position="35"/>
        <end position="438"/>
    </location>
</feature>
<feature type="compositionally biased region" description="Pro residues" evidence="6">
    <location>
        <begin position="122"/>
        <end position="148"/>
    </location>
</feature>
<feature type="compositionally biased region" description="Pro residues" evidence="6">
    <location>
        <begin position="160"/>
        <end position="211"/>
    </location>
</feature>
<feature type="compositionally biased region" description="Polar residues" evidence="6">
    <location>
        <begin position="298"/>
        <end position="314"/>
    </location>
</feature>
<feature type="compositionally biased region" description="Basic and acidic residues" evidence="6">
    <location>
        <begin position="342"/>
        <end position="353"/>
    </location>
</feature>
<feature type="compositionally biased region" description="Basic and acidic residues" evidence="6">
    <location>
        <begin position="360"/>
        <end position="375"/>
    </location>
</feature>
<feature type="compositionally biased region" description="Polar residues" evidence="6">
    <location>
        <begin position="377"/>
        <end position="393"/>
    </location>
</feature>
<feature type="compositionally biased region" description="Polar residues" evidence="6">
    <location>
        <begin position="427"/>
        <end position="438"/>
    </location>
</feature>
<keyword id="KW-0130">Cell adhesion</keyword>
<keyword id="KW-0965">Cell junction</keyword>
<keyword id="KW-0963">Cytoplasm</keyword>
<keyword id="KW-0206">Cytoskeleton</keyword>
<keyword id="KW-0440">LIM domain</keyword>
<keyword id="KW-0479">Metal-binding</keyword>
<keyword id="KW-1185">Reference proteome</keyword>
<keyword id="KW-0677">Repeat</keyword>
<keyword id="KW-0804">Transcription</keyword>
<keyword id="KW-0805">Transcription regulation</keyword>
<keyword id="KW-0862">Zinc</keyword>
<dbReference type="EMBL" id="EF051627">
    <property type="protein sequence ID" value="ABM66816.1"/>
    <property type="molecule type" value="mRNA"/>
</dbReference>
<dbReference type="RefSeq" id="NP_001092151.1">
    <property type="nucleotide sequence ID" value="NM_001098681.1"/>
</dbReference>
<dbReference type="IntAct" id="A5H447">
    <property type="interactions" value="1"/>
</dbReference>
<dbReference type="GeneID" id="100049724"/>
<dbReference type="KEGG" id="xla:100049724"/>
<dbReference type="AGR" id="Xenbase:XB-GENE-6253946"/>
<dbReference type="CTD" id="100049724"/>
<dbReference type="Xenbase" id="XB-GENE-6253946">
    <property type="gene designation" value="zyx.S"/>
</dbReference>
<dbReference type="OrthoDB" id="25414at2759"/>
<dbReference type="Proteomes" id="UP000186698">
    <property type="component" value="Chromosome 7S"/>
</dbReference>
<dbReference type="Bgee" id="100049724">
    <property type="expression patterns" value="Expressed in neurula embryo and 19 other cell types or tissues"/>
</dbReference>
<dbReference type="GO" id="GO:0005737">
    <property type="term" value="C:cytoplasm"/>
    <property type="evidence" value="ECO:0000318"/>
    <property type="project" value="GO_Central"/>
</dbReference>
<dbReference type="GO" id="GO:0005925">
    <property type="term" value="C:focal adhesion"/>
    <property type="evidence" value="ECO:0000250"/>
    <property type="project" value="UniProtKB"/>
</dbReference>
<dbReference type="GO" id="GO:0001725">
    <property type="term" value="C:stress fiber"/>
    <property type="evidence" value="ECO:0000250"/>
    <property type="project" value="UniProtKB"/>
</dbReference>
<dbReference type="GO" id="GO:0140297">
    <property type="term" value="F:DNA-binding transcription factor binding"/>
    <property type="evidence" value="ECO:0000353"/>
    <property type="project" value="UniProtKB"/>
</dbReference>
<dbReference type="GO" id="GO:0046872">
    <property type="term" value="F:metal ion binding"/>
    <property type="evidence" value="ECO:0007669"/>
    <property type="project" value="UniProtKB-KW"/>
</dbReference>
<dbReference type="GO" id="GO:0003712">
    <property type="term" value="F:transcription coregulator activity"/>
    <property type="evidence" value="ECO:0000314"/>
    <property type="project" value="UniProtKB"/>
</dbReference>
<dbReference type="GO" id="GO:0007155">
    <property type="term" value="P:cell adhesion"/>
    <property type="evidence" value="ECO:0007669"/>
    <property type="project" value="UniProtKB-KW"/>
</dbReference>
<dbReference type="GO" id="GO:0007229">
    <property type="term" value="P:integrin-mediated signaling pathway"/>
    <property type="evidence" value="ECO:0000318"/>
    <property type="project" value="GO_Central"/>
</dbReference>
<dbReference type="GO" id="GO:0006357">
    <property type="term" value="P:regulation of transcription by RNA polymerase II"/>
    <property type="evidence" value="ECO:0000315"/>
    <property type="project" value="UniProtKB"/>
</dbReference>
<dbReference type="GO" id="GO:0007179">
    <property type="term" value="P:transforming growth factor beta receptor signaling pathway"/>
    <property type="evidence" value="ECO:0000318"/>
    <property type="project" value="GO_Central"/>
</dbReference>
<dbReference type="CDD" id="cd09349">
    <property type="entry name" value="LIM1_Zyxin"/>
    <property type="match status" value="1"/>
</dbReference>
<dbReference type="CDD" id="cd09435">
    <property type="entry name" value="LIM3_Zyxin"/>
    <property type="match status" value="1"/>
</dbReference>
<dbReference type="FunFam" id="2.10.110.10:FF:000027">
    <property type="entry name" value="lipoma-preferred partner isoform X1"/>
    <property type="match status" value="1"/>
</dbReference>
<dbReference type="FunFam" id="2.10.110.10:FF:000057">
    <property type="entry name" value="Zyxin"/>
    <property type="match status" value="1"/>
</dbReference>
<dbReference type="Gene3D" id="2.10.110.10">
    <property type="entry name" value="Cysteine Rich Protein"/>
    <property type="match status" value="3"/>
</dbReference>
<dbReference type="InterPro" id="IPR001781">
    <property type="entry name" value="Znf_LIM"/>
</dbReference>
<dbReference type="PANTHER" id="PTHR24212:SF1">
    <property type="entry name" value="ZYXIN"/>
    <property type="match status" value="1"/>
</dbReference>
<dbReference type="PANTHER" id="PTHR24212">
    <property type="entry name" value="ZYXIN/TRIP6"/>
    <property type="match status" value="1"/>
</dbReference>
<dbReference type="Pfam" id="PF00412">
    <property type="entry name" value="LIM"/>
    <property type="match status" value="3"/>
</dbReference>
<dbReference type="PRINTS" id="PR01217">
    <property type="entry name" value="PRICHEXTENSN"/>
</dbReference>
<dbReference type="SMART" id="SM00132">
    <property type="entry name" value="LIM"/>
    <property type="match status" value="3"/>
</dbReference>
<dbReference type="SUPFAM" id="SSF57716">
    <property type="entry name" value="Glucocorticoid receptor-like (DNA-binding domain)"/>
    <property type="match status" value="2"/>
</dbReference>
<dbReference type="PROSITE" id="PS00478">
    <property type="entry name" value="LIM_DOMAIN_1"/>
    <property type="match status" value="2"/>
</dbReference>
<dbReference type="PROSITE" id="PS50023">
    <property type="entry name" value="LIM_DOMAIN_2"/>
    <property type="match status" value="3"/>
</dbReference>